<accession>A0A0B5A7N1</accession>
<protein>
    <recommendedName>
        <fullName evidence="4">Con-Ins F2b</fullName>
    </recommendedName>
    <alternativeName>
        <fullName evidence="7">Insulin 2b</fullName>
    </alternativeName>
    <component>
        <recommendedName>
            <fullName evidence="4">Con-Ins F2b B chain</fullName>
        </recommendedName>
    </component>
    <component>
        <recommendedName>
            <fullName evidence="4">Con-Ins F2b A chain</fullName>
        </recommendedName>
    </component>
</protein>
<comment type="function">
    <text evidence="2">This venom insulin facilitates prey capture by rapidly inducing hypoglycemic shock. Intraperitoneal injection of this peptide into zebrafish lowers blood glucose with the same potency than human insulin. In vivo, when applied to water, this peptide reduces overall locomotor activity of zebrafish larvae, observed as a significant decrease in the percentage of time spent swimming and movement frequency.</text>
</comment>
<comment type="subunit">
    <text evidence="2">Heterodimer of A and B chains; disulfide-linked.</text>
</comment>
<comment type="subcellular location">
    <subcellularLocation>
        <location evidence="2">Secreted</location>
    </subcellularLocation>
</comment>
<comment type="tissue specificity">
    <text evidence="6">Expressed by the venom gland.</text>
</comment>
<comment type="similarity">
    <text>Belongs to the insulin family.</text>
</comment>
<evidence type="ECO:0000250" key="1">
    <source>
        <dbReference type="UniProtKB" id="A0A0B5ABD9"/>
    </source>
</evidence>
<evidence type="ECO:0000250" key="2">
    <source>
        <dbReference type="UniProtKB" id="A0A0B5AC95"/>
    </source>
</evidence>
<evidence type="ECO:0000255" key="3"/>
<evidence type="ECO:0000303" key="4">
    <source>
    </source>
</evidence>
<evidence type="ECO:0000305" key="5"/>
<evidence type="ECO:0000305" key="6">
    <source>
    </source>
</evidence>
<evidence type="ECO:0000312" key="7">
    <source>
        <dbReference type="EMBL" id="AJD85824.1"/>
    </source>
</evidence>
<organism>
    <name type="scientific">Conus floridulus</name>
    <name type="common">Cone snail</name>
    <name type="synonym">Lividoconus floridulus</name>
    <dbReference type="NCBI Taxonomy" id="97180"/>
    <lineage>
        <taxon>Eukaryota</taxon>
        <taxon>Metazoa</taxon>
        <taxon>Spiralia</taxon>
        <taxon>Lophotrochozoa</taxon>
        <taxon>Mollusca</taxon>
        <taxon>Gastropoda</taxon>
        <taxon>Caenogastropoda</taxon>
        <taxon>Neogastropoda</taxon>
        <taxon>Conoidea</taxon>
        <taxon>Conidae</taxon>
        <taxon>Conus</taxon>
        <taxon>Lividoconus</taxon>
    </lineage>
</organism>
<dbReference type="EMBL" id="KP268615">
    <property type="protein sequence ID" value="AJD85824.1"/>
    <property type="molecule type" value="mRNA"/>
</dbReference>
<dbReference type="SMR" id="A0A0B5A7N1"/>
<dbReference type="GO" id="GO:0005576">
    <property type="term" value="C:extracellular region"/>
    <property type="evidence" value="ECO:0007669"/>
    <property type="project" value="UniProtKB-SubCell"/>
</dbReference>
<dbReference type="GO" id="GO:0005179">
    <property type="term" value="F:hormone activity"/>
    <property type="evidence" value="ECO:0007669"/>
    <property type="project" value="UniProtKB-KW"/>
</dbReference>
<dbReference type="GO" id="GO:0090729">
    <property type="term" value="F:toxin activity"/>
    <property type="evidence" value="ECO:0007669"/>
    <property type="project" value="UniProtKB-KW"/>
</dbReference>
<dbReference type="GO" id="GO:0006006">
    <property type="term" value="P:glucose metabolic process"/>
    <property type="evidence" value="ECO:0007669"/>
    <property type="project" value="UniProtKB-KW"/>
</dbReference>
<dbReference type="Gene3D" id="1.10.100.10">
    <property type="entry name" value="Insulin-like"/>
    <property type="match status" value="1"/>
</dbReference>
<dbReference type="InterPro" id="IPR016179">
    <property type="entry name" value="Insulin-like"/>
</dbReference>
<dbReference type="InterPro" id="IPR036438">
    <property type="entry name" value="Insulin-like_sf"/>
</dbReference>
<dbReference type="InterPro" id="IPR016724">
    <property type="entry name" value="Insulin-rel_pep"/>
</dbReference>
<dbReference type="InterPro" id="IPR022353">
    <property type="entry name" value="Insulin_CS"/>
</dbReference>
<dbReference type="InterPro" id="IPR022352">
    <property type="entry name" value="Insulin_family"/>
</dbReference>
<dbReference type="Pfam" id="PF00049">
    <property type="entry name" value="Insulin"/>
    <property type="match status" value="1"/>
</dbReference>
<dbReference type="PIRSF" id="PIRSF018431">
    <property type="entry name" value="Molluscan_insulin_rel_peptide"/>
    <property type="match status" value="1"/>
</dbReference>
<dbReference type="PRINTS" id="PR00276">
    <property type="entry name" value="INSULINFAMLY"/>
</dbReference>
<dbReference type="SMART" id="SM00078">
    <property type="entry name" value="IlGF"/>
    <property type="match status" value="1"/>
</dbReference>
<dbReference type="SUPFAM" id="SSF56994">
    <property type="entry name" value="Insulin-like"/>
    <property type="match status" value="1"/>
</dbReference>
<dbReference type="PROSITE" id="PS00262">
    <property type="entry name" value="INSULIN"/>
    <property type="match status" value="1"/>
</dbReference>
<feature type="signal peptide" evidence="3">
    <location>
        <begin position="1"/>
        <end position="24"/>
    </location>
</feature>
<feature type="peptide" id="PRO_5002111993" description="Con-Ins F2b B chain" evidence="1">
    <location>
        <begin position="25"/>
        <end position="58"/>
    </location>
</feature>
<feature type="propeptide" id="PRO_0000439336" description="C peptide" evidence="1">
    <location>
        <begin position="59"/>
        <end position="89"/>
    </location>
</feature>
<feature type="peptide" id="PRO_0000439337" description="Con-Ins F2b A chain" evidence="1">
    <location>
        <begin position="90"/>
        <end position="127"/>
    </location>
</feature>
<feature type="modified residue" description="4-carboxyglutamate; partial" evidence="2">
    <location>
        <position position="115"/>
    </location>
</feature>
<feature type="modified residue" description="Serine amide" evidence="6">
    <location>
        <position position="127"/>
    </location>
</feature>
<feature type="disulfide bond" evidence="5">
    <location>
        <begin position="29"/>
        <end position="104"/>
    </location>
</feature>
<feature type="disulfide bond" description="Interchain (between B and A chains)" evidence="2">
    <location>
        <begin position="41"/>
        <end position="107"/>
    </location>
</feature>
<feature type="disulfide bond" description="Interchain (between B and A chains)" evidence="2">
    <location>
        <begin position="53"/>
        <end position="120"/>
    </location>
</feature>
<feature type="disulfide bond" evidence="2">
    <location>
        <begin position="106"/>
        <end position="111"/>
    </location>
</feature>
<proteinExistence type="evidence at protein level"/>
<sequence>MTTSSYFLLVALGLLLYVCRSSFGSEHTCESDASPHPQGVCGSPLAEAVEAACELEESLQGGTGKKRGRASLLRKRRAFLSMLKARAKRNEASPLQRSGRGIVCECCKNHCNLEELTEYCPPVTEGSG</sequence>
<name>INS2B_CONFO</name>
<reference key="1">
    <citation type="journal article" date="2015" name="Proc. Natl. Acad. Sci. U.S.A.">
        <title>Specialized insulin is used for chemical warfare by fish-hunting cone snails.</title>
        <authorList>
            <person name="Safavi-Hemami H."/>
            <person name="Gajewiak J."/>
            <person name="Karanth S."/>
            <person name="Robinson S.D."/>
            <person name="Ueberheide B."/>
            <person name="Douglass A.D."/>
            <person name="Schlegel A."/>
            <person name="Imperial J.S."/>
            <person name="Watkins M."/>
            <person name="Bandyopadhyay P.K."/>
            <person name="Yandell M."/>
            <person name="Li Q."/>
            <person name="Purcell A.W."/>
            <person name="Norton R.S."/>
            <person name="Ellgaard L."/>
            <person name="Olivera B.M."/>
        </authorList>
    </citation>
    <scope>NUCLEOTIDE SEQUENCE [MRNA]</scope>
    <scope>AMIDATION AT SER-127</scope>
    <source>
        <tissue>Venom gland</tissue>
    </source>
</reference>
<keyword id="KW-0027">Amidation</keyword>
<keyword id="KW-0119">Carbohydrate metabolism</keyword>
<keyword id="KW-0165">Cleavage on pair of basic residues</keyword>
<keyword id="KW-1015">Disulfide bond</keyword>
<keyword id="KW-0301">Gamma-carboxyglutamic acid</keyword>
<keyword id="KW-0313">Glucose metabolism</keyword>
<keyword id="KW-0372">Hormone</keyword>
<keyword id="KW-0964">Secreted</keyword>
<keyword id="KW-0732">Signal</keyword>
<keyword id="KW-0800">Toxin</keyword>